<comment type="function">
    <text evidence="5">This protein binds the cAMP response element (CRE) (consensus: 5'-GTGACGT[AC][AG]-3'), a sequence present in many viral and cellular promoters. Represses transcription from promoters with ATF sites. It may repress transcription by stabilizing the binding of inhibitory cofactors at the promoter.</text>
</comment>
<comment type="function">
    <molecule>Isoform 2</molecule>
    <text evidence="5">Activates transcription presumably by sequestering inhibitory cofactors away from the promoters.</text>
</comment>
<comment type="function">
    <molecule>Isoform 3</molecule>
    <text evidence="2">Stress-induced isoform, counteracts the transcriptional repression of isoform 1.</text>
</comment>
<comment type="subunit">
    <text evidence="3">Binds DNA as a homodimer or a heterodimer. Interacts with KAT5; promoting KAT5 autoacetylation and KAT5 deubiquitination by USP7 (PubMed:25865756).</text>
</comment>
<comment type="interaction">
    <interactant intactId="EBI-712767">
        <id>P18847</id>
    </interactant>
    <interactant intactId="EBI-21535880">
        <id>Q92870-2</id>
        <label>APBB2</label>
    </interactant>
    <organismsDiffer>false</organismsDiffer>
    <experiments>3</experiments>
</comment>
<comment type="interaction">
    <interactant intactId="EBI-712767">
        <id>P18847</id>
    </interactant>
    <interactant intactId="EBI-1170906">
        <id>P15336</id>
        <label>ATF2</label>
    </interactant>
    <organismsDiffer>false</organismsDiffer>
    <experiments>5</experiments>
</comment>
<comment type="interaction">
    <interactant intactId="EBI-712767">
        <id>P18847</id>
    </interactant>
    <interactant intactId="EBI-712767">
        <id>P18847</id>
        <label>ATF3</label>
    </interactant>
    <organismsDiffer>false</organismsDiffer>
    <experiments>3</experiments>
</comment>
<comment type="interaction">
    <interactant intactId="EBI-712767">
        <id>P18847</id>
    </interactant>
    <interactant intactId="EBI-492498">
        <id>P18848</id>
        <label>ATF4</label>
    </interactant>
    <organismsDiffer>false</organismsDiffer>
    <experiments>9</experiments>
</comment>
<comment type="interaction">
    <interactant intactId="EBI-712767">
        <id>P18847</id>
    </interactant>
    <interactant intactId="EBI-765623">
        <id>P17544</id>
        <label>ATF7</label>
    </interactant>
    <organismsDiffer>false</organismsDiffer>
    <experiments>3</experiments>
</comment>
<comment type="interaction">
    <interactant intactId="EBI-712767">
        <id>P18847</id>
    </interactant>
    <interactant intactId="EBI-930964">
        <id>P54253</id>
        <label>ATXN1</label>
    </interactant>
    <organismsDiffer>false</organismsDiffer>
    <experiments>6</experiments>
</comment>
<comment type="interaction">
    <interactant intactId="EBI-712767">
        <id>P18847</id>
    </interactant>
    <interactant intactId="EBI-749503">
        <id>Q16520</id>
        <label>BATF</label>
    </interactant>
    <organismsDiffer>false</organismsDiffer>
    <experiments>2</experiments>
</comment>
<comment type="interaction">
    <interactant intactId="EBI-712767">
        <id>P18847</id>
    </interactant>
    <interactant intactId="EBI-10312707">
        <id>Q9NR55</id>
        <label>BATF3</label>
    </interactant>
    <organismsDiffer>false</organismsDiffer>
    <experiments>5</experiments>
</comment>
<comment type="interaction">
    <interactant intactId="EBI-712767">
        <id>P18847</id>
    </interactant>
    <interactant intactId="EBI-1172054">
        <id>P49715</id>
        <label>CEBPA</label>
    </interactant>
    <organismsDiffer>false</organismsDiffer>
    <experiments>2</experiments>
</comment>
<comment type="interaction">
    <interactant intactId="EBI-712767">
        <id>P18847</id>
    </interactant>
    <interactant intactId="EBI-3907048">
        <id>Q15744</id>
        <label>CEBPE</label>
    </interactant>
    <organismsDiffer>false</organismsDiffer>
    <experiments>2</experiments>
</comment>
<comment type="interaction">
    <interactant intactId="EBI-712767">
        <id>P18847</id>
    </interactant>
    <interactant intactId="EBI-740209">
        <id>P53567</id>
        <label>CEBPG</label>
    </interactant>
    <organismsDiffer>false</organismsDiffer>
    <experiments>5</experiments>
</comment>
<comment type="interaction">
    <interactant intactId="EBI-712767">
        <id>P18847</id>
    </interactant>
    <interactant intactId="EBI-25840379">
        <id>Q14203-5</id>
        <label>DCTN1</label>
    </interactant>
    <organismsDiffer>false</organismsDiffer>
    <experiments>3</experiments>
</comment>
<comment type="interaction">
    <interactant intactId="EBI-712767">
        <id>P18847</id>
    </interactant>
    <interactant intactId="EBI-742651">
        <id>P35638</id>
        <label>DDIT3</label>
    </interactant>
    <organismsDiffer>false</organismsDiffer>
    <experiments>38</experiments>
</comment>
<comment type="interaction">
    <interactant intactId="EBI-712767">
        <id>P18847</id>
    </interactant>
    <interactant intactId="EBI-701903">
        <id>Q14192</id>
        <label>FHL2</label>
    </interactant>
    <organismsDiffer>false</organismsDiffer>
    <experiments>3</experiments>
</comment>
<comment type="interaction">
    <interactant intactId="EBI-712767">
        <id>P18847</id>
    </interactant>
    <interactant intactId="EBI-852851">
        <id>P01100</id>
        <label>FOS</label>
    </interactant>
    <organismsDiffer>false</organismsDiffer>
    <experiments>2</experiments>
</comment>
<comment type="interaction">
    <interactant intactId="EBI-712767">
        <id>P18847</id>
    </interactant>
    <interactant intactId="EBI-852823">
        <id>P05412</id>
        <label>JUN</label>
    </interactant>
    <organismsDiffer>false</organismsDiffer>
    <experiments>10</experiments>
</comment>
<comment type="interaction">
    <interactant intactId="EBI-712767">
        <id>P18847</id>
    </interactant>
    <interactant intactId="EBI-748062">
        <id>P17275</id>
        <label>JUNB</label>
    </interactant>
    <organismsDiffer>false</organismsDiffer>
    <experiments>7</experiments>
</comment>
<comment type="interaction">
    <interactant intactId="EBI-712767">
        <id>P18847</id>
    </interactant>
    <interactant intactId="EBI-2682803">
        <id>P17535</id>
        <label>JUND</label>
    </interactant>
    <organismsDiffer>false</organismsDiffer>
    <experiments>3</experiments>
</comment>
<comment type="interaction">
    <interactant intactId="EBI-712767">
        <id>P18847</id>
    </interactant>
    <interactant intactId="EBI-721128">
        <id>Q9ULX9</id>
        <label>MAFF</label>
    </interactant>
    <organismsDiffer>false</organismsDiffer>
    <experiments>2</experiments>
</comment>
<comment type="interaction">
    <interactant intactId="EBI-712767">
        <id>P18847</id>
    </interactant>
    <interactant intactId="EBI-6907210">
        <id>O95644</id>
        <label>NFATC1</label>
    </interactant>
    <organismsDiffer>false</organismsDiffer>
    <experiments>2</experiments>
</comment>
<comment type="interaction">
    <interactant intactId="EBI-712767">
        <id>P18847</id>
    </interactant>
    <interactant intactId="EBI-2007911">
        <id>Q16236</id>
        <label>NFE2L2</label>
    </interactant>
    <organismsDiffer>false</organismsDiffer>
    <experiments>5</experiments>
</comment>
<comment type="interaction">
    <interactant intactId="EBI-712767">
        <id>P18847</id>
    </interactant>
    <interactant intactId="EBI-50433196">
        <id>A0A6Q8PF08</id>
        <label>PMP22</label>
    </interactant>
    <organismsDiffer>false</organismsDiffer>
    <experiments>3</experiments>
</comment>
<comment type="interaction">
    <interactant intactId="EBI-712767">
        <id>P18847</id>
    </interactant>
    <interactant intactId="EBI-985879">
        <id>P37840</id>
        <label>SNCA</label>
    </interactant>
    <organismsDiffer>false</organismsDiffer>
    <experiments>3</experiments>
</comment>
<comment type="interaction">
    <interactant intactId="EBI-712767">
        <id>P18847</id>
    </interactant>
    <interactant intactId="EBI-372899">
        <id>Q13148</id>
        <label>TARDBP</label>
    </interactant>
    <organismsDiffer>false</organismsDiffer>
    <experiments>6</experiments>
</comment>
<comment type="interaction">
    <interactant intactId="EBI-712767">
        <id>P18847</id>
    </interactant>
    <interactant intactId="EBI-714860">
        <id>P09936</id>
        <label>UCHL1</label>
    </interactant>
    <organismsDiffer>false</organismsDiffer>
    <experiments>3</experiments>
</comment>
<comment type="interaction">
    <interactant intactId="EBI-9844134">
        <id>P18847-3</id>
    </interactant>
    <interactant intactId="EBI-73886">
        <id>Q04206</id>
        <label>RELA</label>
    </interactant>
    <organismsDiffer>false</organismsDiffer>
    <experiments>5</experiments>
</comment>
<comment type="subcellular location">
    <subcellularLocation>
        <location evidence="1 2">Nucleus</location>
    </subcellularLocation>
</comment>
<comment type="alternative products">
    <event type="alternative splicing"/>
    <isoform>
        <id>P18847-1</id>
        <name>1</name>
        <name>ATF3</name>
        <sequence type="displayed"/>
    </isoform>
    <isoform>
        <id>P18847-2</id>
        <name>2</name>
        <name evidence="10">ATF3-delta-Zip</name>
        <sequence type="described" ref="VSP_000592"/>
    </isoform>
    <isoform>
        <id>P18847-3</id>
        <name>3</name>
        <name>ATF3-delta-Zip2a/TF3-delta-Zip2b</name>
        <sequence type="described" ref="VSP_043150"/>
    </isoform>
    <isoform>
        <id>P18847-4</id>
        <name>4</name>
        <name>ATF3-delta-Zip2c</name>
        <sequence type="described" ref="VSP_043182 VSP_043150"/>
    </isoform>
    <isoform>
        <id>P18847-5</id>
        <name>5</name>
        <sequence type="described" ref="VSP_046966"/>
    </isoform>
</comment>
<comment type="miscellaneous">
    <molecule>Isoform 2</molecule>
    <text evidence="11">May be produced at very low levels due to a premature stop codon in the mRNA, leading to nonsense-mediated mRNA decay.</text>
</comment>
<comment type="similarity">
    <text evidence="11">Belongs to the bZIP family. ATF subfamily.</text>
</comment>
<comment type="online information" name="Atlas of Genetics and Cytogenetics in Oncology and Haematology">
    <link uri="https://atlasgeneticsoncology.org/gene/719/ATF3"/>
</comment>
<feature type="chain" id="PRO_0000076581" description="Cyclic AMP-dependent transcription factor ATF-3">
    <location>
        <begin position="1"/>
        <end position="181"/>
    </location>
</feature>
<feature type="domain" description="bZIP" evidence="1">
    <location>
        <begin position="86"/>
        <end position="149"/>
    </location>
</feature>
<feature type="region of interest" description="Basic motif" evidence="1">
    <location>
        <begin position="88"/>
        <end position="110"/>
    </location>
</feature>
<feature type="region of interest" description="Leucine-zipper" evidence="1">
    <location>
        <begin position="114"/>
        <end position="142"/>
    </location>
</feature>
<feature type="modified residue" description="Phosphothreonine" evidence="13">
    <location>
        <position position="162"/>
    </location>
</feature>
<feature type="cross-link" description="Glycyl lysine isopeptide (Lys-Gly) (interchain with G-Cter in SUMO2)" evidence="14">
    <location>
        <position position="78"/>
    </location>
</feature>
<feature type="cross-link" description="Glycyl lysine isopeptide (Lys-Gly) (interchain with G-Cter in SUMO2)" evidence="14">
    <location>
        <position position="175"/>
    </location>
</feature>
<feature type="splice variant" id="VSP_046966" description="In isoform 5." evidence="9">
    <location>
        <begin position="1"/>
        <end position="57"/>
    </location>
</feature>
<feature type="splice variant" id="VSP_043182" description="In isoform 4." evidence="8">
    <location>
        <begin position="14"/>
        <end position="42"/>
    </location>
</feature>
<feature type="splice variant" id="VSP_000592" description="In isoform 2." evidence="10">
    <original>KESEKLESVNAELKAQIEELKNEKQHLIYMLNLHRPTCIVRAQNGRTPEDERNLFIQQIKEGTLQS</original>
    <variation>LQY</variation>
    <location>
        <begin position="116"/>
        <end position="181"/>
    </location>
</feature>
<feature type="splice variant" id="VSP_043150" description="In isoform 3 and isoform 4." evidence="7 8">
    <original>ESEKLESVNAELKAQIEELKNEKQHLIYMLNLHRPTCIVRAQNGRTPEDERNLFIQQIKEGTLQS</original>
    <variation>LPRPFWVQKTCIWAVDSCK</variation>
    <location>
        <begin position="117"/>
        <end position="181"/>
    </location>
</feature>
<feature type="sequence variant" id="VAR_048442" description="In dbSNP:rs11571541." evidence="6">
    <original>T</original>
    <variation>M</variation>
    <location>
        <position position="38"/>
    </location>
</feature>
<feature type="sequence variant" id="VAR_081532" description="Found in a patient with childhood apraxia of speech; uncertain significance." evidence="4">
    <original>N</original>
    <variation>T</variation>
    <location>
        <position position="168"/>
    </location>
</feature>
<feature type="sequence conflict" description="In Ref. 11; no nucleotide entry." evidence="11" ref="11">
    <original>I</original>
    <variation>L</variation>
    <location>
        <position position="132"/>
    </location>
</feature>
<name>ATF3_HUMAN</name>
<reference key="1">
    <citation type="journal article" date="1994" name="J. Biol. Chem.">
        <title>ATF3 and ATF3 delta Zip. Transcriptional repression versus activation by alternatively spliced isoforms.</title>
        <authorList>
            <person name="Chen B.P.C."/>
            <person name="Liang G."/>
            <person name="Whelan J."/>
            <person name="Hai T."/>
        </authorList>
    </citation>
    <scope>NUCLEOTIDE SEQUENCE [MRNA] (ISOFORMS 1 AND 2)</scope>
    <scope>FUNCTION</scope>
</reference>
<reference key="2">
    <citation type="journal article" date="2002" name="Nucleic Acids Res.">
        <title>An alternatively spliced isoform of transcriptional repressor ATF3 and its induction by stress stimuli.</title>
        <authorList>
            <person name="Hashimoto Y."/>
            <person name="Zhang C."/>
            <person name="Kawauchi J."/>
            <person name="Imoto I."/>
            <person name="Adachi M.T."/>
            <person name="Inazawa J."/>
            <person name="Amagasa T."/>
            <person name="Hai T."/>
            <person name="Kitajima S."/>
        </authorList>
    </citation>
    <scope>NUCLEOTIDE SEQUENCE [MRNA] (ISOFORM 3)</scope>
    <scope>FUNCTION (ISOFORM 3)</scope>
    <scope>SUBCELLULAR LOCATION</scope>
    <scope>ALTERNATIVE SPLICING</scope>
</reference>
<reference key="3">
    <citation type="journal article" date="2003" name="J. Biol. Chem.">
        <title>Amino acid deprivation and endoplasmic reticulum stress induce expression of multiple activating transcription factor-3 mRNA species that, when overexpressed in HepG2 cells, modulate transcription by the human asparagine synthetase promoter.</title>
        <authorList>
            <person name="Pan Y."/>
            <person name="Chen H."/>
            <person name="Siu F."/>
            <person name="Kilberg M.S."/>
        </authorList>
    </citation>
    <scope>NUCLEOTIDE SEQUENCE [MRNA] (ISOFORM 4)</scope>
    <scope>ALTERNATIVE SPLICING</scope>
</reference>
<reference key="4">
    <citation type="submission" date="2003-05" db="EMBL/GenBank/DDBJ databases">
        <title>Cloning of human full-length CDSs in BD Creator(TM) system donor vector.</title>
        <authorList>
            <person name="Kalnine N."/>
            <person name="Chen X."/>
            <person name="Rolfs A."/>
            <person name="Halleck A."/>
            <person name="Hines L."/>
            <person name="Eisenstein S."/>
            <person name="Koundinya M."/>
            <person name="Raphael J."/>
            <person name="Moreira D."/>
            <person name="Kelley T."/>
            <person name="LaBaer J."/>
            <person name="Lin Y."/>
            <person name="Phelan M."/>
            <person name="Farmer A."/>
        </authorList>
    </citation>
    <scope>NUCLEOTIDE SEQUENCE [LARGE SCALE MRNA] (ISOFORM 1)</scope>
</reference>
<reference key="5">
    <citation type="submission" date="2003-10" db="EMBL/GenBank/DDBJ databases">
        <authorList>
            <consortium name="NIEHS SNPs program"/>
        </authorList>
    </citation>
    <scope>NUCLEOTIDE SEQUENCE [GENOMIC DNA]</scope>
    <scope>VARIANT MET-38</scope>
</reference>
<reference key="6">
    <citation type="journal article" date="2004" name="Nat. Genet.">
        <title>Complete sequencing and characterization of 21,243 full-length human cDNAs.</title>
        <authorList>
            <person name="Ota T."/>
            <person name="Suzuki Y."/>
            <person name="Nishikawa T."/>
            <person name="Otsuki T."/>
            <person name="Sugiyama T."/>
            <person name="Irie R."/>
            <person name="Wakamatsu A."/>
            <person name="Hayashi K."/>
            <person name="Sato H."/>
            <person name="Nagai K."/>
            <person name="Kimura K."/>
            <person name="Makita H."/>
            <person name="Sekine M."/>
            <person name="Obayashi M."/>
            <person name="Nishi T."/>
            <person name="Shibahara T."/>
            <person name="Tanaka T."/>
            <person name="Ishii S."/>
            <person name="Yamamoto J."/>
            <person name="Saito K."/>
            <person name="Kawai Y."/>
            <person name="Isono Y."/>
            <person name="Nakamura Y."/>
            <person name="Nagahari K."/>
            <person name="Murakami K."/>
            <person name="Yasuda T."/>
            <person name="Iwayanagi T."/>
            <person name="Wagatsuma M."/>
            <person name="Shiratori A."/>
            <person name="Sudo H."/>
            <person name="Hosoiri T."/>
            <person name="Kaku Y."/>
            <person name="Kodaira H."/>
            <person name="Kondo H."/>
            <person name="Sugawara M."/>
            <person name="Takahashi M."/>
            <person name="Kanda K."/>
            <person name="Yokoi T."/>
            <person name="Furuya T."/>
            <person name="Kikkawa E."/>
            <person name="Omura Y."/>
            <person name="Abe K."/>
            <person name="Kamihara K."/>
            <person name="Katsuta N."/>
            <person name="Sato K."/>
            <person name="Tanikawa M."/>
            <person name="Yamazaki M."/>
            <person name="Ninomiya K."/>
            <person name="Ishibashi T."/>
            <person name="Yamashita H."/>
            <person name="Murakawa K."/>
            <person name="Fujimori K."/>
            <person name="Tanai H."/>
            <person name="Kimata M."/>
            <person name="Watanabe M."/>
            <person name="Hiraoka S."/>
            <person name="Chiba Y."/>
            <person name="Ishida S."/>
            <person name="Ono Y."/>
            <person name="Takiguchi S."/>
            <person name="Watanabe S."/>
            <person name="Yosida M."/>
            <person name="Hotuta T."/>
            <person name="Kusano J."/>
            <person name="Kanehori K."/>
            <person name="Takahashi-Fujii A."/>
            <person name="Hara H."/>
            <person name="Tanase T.-O."/>
            <person name="Nomura Y."/>
            <person name="Togiya S."/>
            <person name="Komai F."/>
            <person name="Hara R."/>
            <person name="Takeuchi K."/>
            <person name="Arita M."/>
            <person name="Imose N."/>
            <person name="Musashino K."/>
            <person name="Yuuki H."/>
            <person name="Oshima A."/>
            <person name="Sasaki N."/>
            <person name="Aotsuka S."/>
            <person name="Yoshikawa Y."/>
            <person name="Matsunawa H."/>
            <person name="Ichihara T."/>
            <person name="Shiohata N."/>
            <person name="Sano S."/>
            <person name="Moriya S."/>
            <person name="Momiyama H."/>
            <person name="Satoh N."/>
            <person name="Takami S."/>
            <person name="Terashima Y."/>
            <person name="Suzuki O."/>
            <person name="Nakagawa S."/>
            <person name="Senoh A."/>
            <person name="Mizoguchi H."/>
            <person name="Goto Y."/>
            <person name="Shimizu F."/>
            <person name="Wakebe H."/>
            <person name="Hishigaki H."/>
            <person name="Watanabe T."/>
            <person name="Sugiyama A."/>
            <person name="Takemoto M."/>
            <person name="Kawakami B."/>
            <person name="Yamazaki M."/>
            <person name="Watanabe K."/>
            <person name="Kumagai A."/>
            <person name="Itakura S."/>
            <person name="Fukuzumi Y."/>
            <person name="Fujimori Y."/>
            <person name="Komiyama M."/>
            <person name="Tashiro H."/>
            <person name="Tanigami A."/>
            <person name="Fujiwara T."/>
            <person name="Ono T."/>
            <person name="Yamada K."/>
            <person name="Fujii Y."/>
            <person name="Ozaki K."/>
            <person name="Hirao M."/>
            <person name="Ohmori Y."/>
            <person name="Kawabata A."/>
            <person name="Hikiji T."/>
            <person name="Kobatake N."/>
            <person name="Inagaki H."/>
            <person name="Ikema Y."/>
            <person name="Okamoto S."/>
            <person name="Okitani R."/>
            <person name="Kawakami T."/>
            <person name="Noguchi S."/>
            <person name="Itoh T."/>
            <person name="Shigeta K."/>
            <person name="Senba T."/>
            <person name="Matsumura K."/>
            <person name="Nakajima Y."/>
            <person name="Mizuno T."/>
            <person name="Morinaga M."/>
            <person name="Sasaki M."/>
            <person name="Togashi T."/>
            <person name="Oyama M."/>
            <person name="Hata H."/>
            <person name="Watanabe M."/>
            <person name="Komatsu T."/>
            <person name="Mizushima-Sugano J."/>
            <person name="Satoh T."/>
            <person name="Shirai Y."/>
            <person name="Takahashi Y."/>
            <person name="Nakagawa K."/>
            <person name="Okumura K."/>
            <person name="Nagase T."/>
            <person name="Nomura N."/>
            <person name="Kikuchi H."/>
            <person name="Masuho Y."/>
            <person name="Yamashita R."/>
            <person name="Nakai K."/>
            <person name="Yada T."/>
            <person name="Nakamura Y."/>
            <person name="Ohara O."/>
            <person name="Isogai T."/>
            <person name="Sugano S."/>
        </authorList>
    </citation>
    <scope>NUCLEOTIDE SEQUENCE [LARGE SCALE MRNA] (ISOFORM 1)</scope>
    <scope>NUCLEOTIDE SEQUENCE [LARGE SCALE MRNA] OF 1-147 (ISOFORM 5)</scope>
    <source>
        <tissue>Cerebellum</tissue>
        <tissue>Lung</tissue>
    </source>
</reference>
<reference key="7">
    <citation type="submission" date="2004-05" db="EMBL/GenBank/DDBJ databases">
        <title>Cloning of human full open reading frames in Gateway(TM) system entry vector (pDONR201).</title>
        <authorList>
            <person name="Ebert L."/>
            <person name="Schick M."/>
            <person name="Neubert P."/>
            <person name="Schatten R."/>
            <person name="Henze S."/>
            <person name="Korn B."/>
        </authorList>
    </citation>
    <scope>NUCLEOTIDE SEQUENCE [LARGE SCALE MRNA] (ISOFORM 1)</scope>
</reference>
<reference key="8">
    <citation type="journal article" date="2006" name="Nature">
        <title>The DNA sequence and biological annotation of human chromosome 1.</title>
        <authorList>
            <person name="Gregory S.G."/>
            <person name="Barlow K.F."/>
            <person name="McLay K.E."/>
            <person name="Kaul R."/>
            <person name="Swarbreck D."/>
            <person name="Dunham A."/>
            <person name="Scott C.E."/>
            <person name="Howe K.L."/>
            <person name="Woodfine K."/>
            <person name="Spencer C.C.A."/>
            <person name="Jones M.C."/>
            <person name="Gillson C."/>
            <person name="Searle S."/>
            <person name="Zhou Y."/>
            <person name="Kokocinski F."/>
            <person name="McDonald L."/>
            <person name="Evans R."/>
            <person name="Phillips K."/>
            <person name="Atkinson A."/>
            <person name="Cooper R."/>
            <person name="Jones C."/>
            <person name="Hall R.E."/>
            <person name="Andrews T.D."/>
            <person name="Lloyd C."/>
            <person name="Ainscough R."/>
            <person name="Almeida J.P."/>
            <person name="Ambrose K.D."/>
            <person name="Anderson F."/>
            <person name="Andrew R.W."/>
            <person name="Ashwell R.I.S."/>
            <person name="Aubin K."/>
            <person name="Babbage A.K."/>
            <person name="Bagguley C.L."/>
            <person name="Bailey J."/>
            <person name="Beasley H."/>
            <person name="Bethel G."/>
            <person name="Bird C.P."/>
            <person name="Bray-Allen S."/>
            <person name="Brown J.Y."/>
            <person name="Brown A.J."/>
            <person name="Buckley D."/>
            <person name="Burton J."/>
            <person name="Bye J."/>
            <person name="Carder C."/>
            <person name="Chapman J.C."/>
            <person name="Clark S.Y."/>
            <person name="Clarke G."/>
            <person name="Clee C."/>
            <person name="Cobley V."/>
            <person name="Collier R.E."/>
            <person name="Corby N."/>
            <person name="Coville G.J."/>
            <person name="Davies J."/>
            <person name="Deadman R."/>
            <person name="Dunn M."/>
            <person name="Earthrowl M."/>
            <person name="Ellington A.G."/>
            <person name="Errington H."/>
            <person name="Frankish A."/>
            <person name="Frankland J."/>
            <person name="French L."/>
            <person name="Garner P."/>
            <person name="Garnett J."/>
            <person name="Gay L."/>
            <person name="Ghori M.R.J."/>
            <person name="Gibson R."/>
            <person name="Gilby L.M."/>
            <person name="Gillett W."/>
            <person name="Glithero R.J."/>
            <person name="Grafham D.V."/>
            <person name="Griffiths C."/>
            <person name="Griffiths-Jones S."/>
            <person name="Grocock R."/>
            <person name="Hammond S."/>
            <person name="Harrison E.S.I."/>
            <person name="Hart E."/>
            <person name="Haugen E."/>
            <person name="Heath P.D."/>
            <person name="Holmes S."/>
            <person name="Holt K."/>
            <person name="Howden P.J."/>
            <person name="Hunt A.R."/>
            <person name="Hunt S.E."/>
            <person name="Hunter G."/>
            <person name="Isherwood J."/>
            <person name="James R."/>
            <person name="Johnson C."/>
            <person name="Johnson D."/>
            <person name="Joy A."/>
            <person name="Kay M."/>
            <person name="Kershaw J.K."/>
            <person name="Kibukawa M."/>
            <person name="Kimberley A.M."/>
            <person name="King A."/>
            <person name="Knights A.J."/>
            <person name="Lad H."/>
            <person name="Laird G."/>
            <person name="Lawlor S."/>
            <person name="Leongamornlert D.A."/>
            <person name="Lloyd D.M."/>
            <person name="Loveland J."/>
            <person name="Lovell J."/>
            <person name="Lush M.J."/>
            <person name="Lyne R."/>
            <person name="Martin S."/>
            <person name="Mashreghi-Mohammadi M."/>
            <person name="Matthews L."/>
            <person name="Matthews N.S.W."/>
            <person name="McLaren S."/>
            <person name="Milne S."/>
            <person name="Mistry S."/>
            <person name="Moore M.J.F."/>
            <person name="Nickerson T."/>
            <person name="O'Dell C.N."/>
            <person name="Oliver K."/>
            <person name="Palmeiri A."/>
            <person name="Palmer S.A."/>
            <person name="Parker A."/>
            <person name="Patel D."/>
            <person name="Pearce A.V."/>
            <person name="Peck A.I."/>
            <person name="Pelan S."/>
            <person name="Phelps K."/>
            <person name="Phillimore B.J."/>
            <person name="Plumb R."/>
            <person name="Rajan J."/>
            <person name="Raymond C."/>
            <person name="Rouse G."/>
            <person name="Saenphimmachak C."/>
            <person name="Sehra H.K."/>
            <person name="Sheridan E."/>
            <person name="Shownkeen R."/>
            <person name="Sims S."/>
            <person name="Skuce C.D."/>
            <person name="Smith M."/>
            <person name="Steward C."/>
            <person name="Subramanian S."/>
            <person name="Sycamore N."/>
            <person name="Tracey A."/>
            <person name="Tromans A."/>
            <person name="Van Helmond Z."/>
            <person name="Wall M."/>
            <person name="Wallis J.M."/>
            <person name="White S."/>
            <person name="Whitehead S.L."/>
            <person name="Wilkinson J.E."/>
            <person name="Willey D.L."/>
            <person name="Williams H."/>
            <person name="Wilming L."/>
            <person name="Wray P.W."/>
            <person name="Wu Z."/>
            <person name="Coulson A."/>
            <person name="Vaudin M."/>
            <person name="Sulston J.E."/>
            <person name="Durbin R.M."/>
            <person name="Hubbard T."/>
            <person name="Wooster R."/>
            <person name="Dunham I."/>
            <person name="Carter N.P."/>
            <person name="McVean G."/>
            <person name="Ross M.T."/>
            <person name="Harrow J."/>
            <person name="Olson M.V."/>
            <person name="Beck S."/>
            <person name="Rogers J."/>
            <person name="Bentley D.R."/>
        </authorList>
    </citation>
    <scope>NUCLEOTIDE SEQUENCE [LARGE SCALE GENOMIC DNA]</scope>
</reference>
<reference key="9">
    <citation type="submission" date="2005-09" db="EMBL/GenBank/DDBJ databases">
        <authorList>
            <person name="Mural R.J."/>
            <person name="Istrail S."/>
            <person name="Sutton G."/>
            <person name="Florea L."/>
            <person name="Halpern A.L."/>
            <person name="Mobarry C.M."/>
            <person name="Lippert R."/>
            <person name="Walenz B."/>
            <person name="Shatkay H."/>
            <person name="Dew I."/>
            <person name="Miller J.R."/>
            <person name="Flanigan M.J."/>
            <person name="Edwards N.J."/>
            <person name="Bolanos R."/>
            <person name="Fasulo D."/>
            <person name="Halldorsson B.V."/>
            <person name="Hannenhalli S."/>
            <person name="Turner R."/>
            <person name="Yooseph S."/>
            <person name="Lu F."/>
            <person name="Nusskern D.R."/>
            <person name="Shue B.C."/>
            <person name="Zheng X.H."/>
            <person name="Zhong F."/>
            <person name="Delcher A.L."/>
            <person name="Huson D.H."/>
            <person name="Kravitz S.A."/>
            <person name="Mouchard L."/>
            <person name="Reinert K."/>
            <person name="Remington K.A."/>
            <person name="Clark A.G."/>
            <person name="Waterman M.S."/>
            <person name="Eichler E.E."/>
            <person name="Adams M.D."/>
            <person name="Hunkapiller M.W."/>
            <person name="Myers E.W."/>
            <person name="Venter J.C."/>
        </authorList>
    </citation>
    <scope>NUCLEOTIDE SEQUENCE [LARGE SCALE GENOMIC DNA]</scope>
</reference>
<reference key="10">
    <citation type="journal article" date="2004" name="Genome Res.">
        <title>The status, quality, and expansion of the NIH full-length cDNA project: the Mammalian Gene Collection (MGC).</title>
        <authorList>
            <consortium name="The MGC Project Team"/>
        </authorList>
    </citation>
    <scope>NUCLEOTIDE SEQUENCE [LARGE SCALE MRNA] (ISOFORM 1)</scope>
    <source>
        <tissue>Muscle</tissue>
    </source>
</reference>
<reference key="11">
    <citation type="journal article" date="1989" name="Genes Dev.">
        <title>Transcription factor ATF cDNA clones: an extensive family of leucine zipper proteins able to selectively form DNA-binding heterodimers.</title>
        <authorList>
            <person name="Hai T."/>
            <person name="Liu F."/>
            <person name="Coukos W.J."/>
            <person name="Green M.R."/>
        </authorList>
    </citation>
    <scope>NUCLEOTIDE SEQUENCE [MRNA] OF 25-181</scope>
</reference>
<reference key="12">
    <citation type="journal article" date="1990" name="Genes Dev.">
        <authorList>
            <person name="Hai T."/>
            <person name="Liu F."/>
            <person name="Coukos W.J."/>
            <person name="Green M.R."/>
        </authorList>
    </citation>
    <scope>ERRATUM OF PUBMED:2516827</scope>
</reference>
<reference key="13">
    <citation type="journal article" date="2004" name="Genome Biol.">
        <title>An unappreciated role for RNA surveillance.</title>
        <authorList>
            <person name="Hillman R.T."/>
            <person name="Green R.E."/>
            <person name="Brenner S.E."/>
        </authorList>
    </citation>
    <scope>SPLICE ISOFORM(S) THAT ARE POTENTIAL NMD TARGET(S)</scope>
</reference>
<reference key="14">
    <citation type="journal article" date="2013" name="J. Proteome Res.">
        <title>Toward a comprehensive characterization of a human cancer cell phosphoproteome.</title>
        <authorList>
            <person name="Zhou H."/>
            <person name="Di Palma S."/>
            <person name="Preisinger C."/>
            <person name="Peng M."/>
            <person name="Polat A.N."/>
            <person name="Heck A.J."/>
            <person name="Mohammed S."/>
        </authorList>
    </citation>
    <scope>PHOSPHORYLATION [LARGE SCALE ANALYSIS] AT THR-162</scope>
    <scope>IDENTIFICATION BY MASS SPECTROMETRY [LARGE SCALE ANALYSIS]</scope>
    <source>
        <tissue>Erythroleukemia</tissue>
    </source>
</reference>
<reference key="15">
    <citation type="journal article" date="2017" name="Nat. Struct. Mol. Biol.">
        <title>Site-specific mapping of the human SUMO proteome reveals co-modification with phosphorylation.</title>
        <authorList>
            <person name="Hendriks I.A."/>
            <person name="Lyon D."/>
            <person name="Young C."/>
            <person name="Jensen L.J."/>
            <person name="Vertegaal A.C."/>
            <person name="Nielsen M.L."/>
        </authorList>
    </citation>
    <scope>SUMOYLATION [LARGE SCALE ANALYSIS] AT LYS-78 AND LYS-175</scope>
    <scope>IDENTIFICATION BY MASS SPECTROMETRY [LARGE SCALE ANALYSIS]</scope>
</reference>
<reference key="16">
    <citation type="journal article" date="2015" name="Nat. Commun.">
        <title>The stress-responsive gene ATF3 regulates the histone acetyltransferase Tip60.</title>
        <authorList>
            <person name="Cui H."/>
            <person name="Guo M."/>
            <person name="Xu D."/>
            <person name="Ding Z.C."/>
            <person name="Zhou G."/>
            <person name="Ding H.F."/>
            <person name="Zhang J."/>
            <person name="Tang Y."/>
            <person name="Yan C."/>
        </authorList>
    </citation>
    <scope>INTERACTION WITH KAT5</scope>
</reference>
<reference key="17">
    <citation type="journal article" date="2019" name="Mol. Psychiatry">
        <title>A set of regulatory genes co-expressed in embryonic human brain is implicated in disrupted speech development.</title>
        <authorList>
            <person name="Eising E."/>
            <person name="Carrion-Castillo A."/>
            <person name="Vino A."/>
            <person name="Strand E.A."/>
            <person name="Jakielski K.J."/>
            <person name="Scerri T.S."/>
            <person name="Hildebrand M.S."/>
            <person name="Webster R."/>
            <person name="Ma A."/>
            <person name="Mazoyer B."/>
            <person name="Francks C."/>
            <person name="Bahlo M."/>
            <person name="Scheffer I.E."/>
            <person name="Morgan A.T."/>
            <person name="Shriberg L.D."/>
            <person name="Fisher S.E."/>
        </authorList>
    </citation>
    <scope>VARIANT THR-168</scope>
</reference>
<dbReference type="EMBL" id="L19871">
    <property type="protein sequence ID" value="AAA20506.1"/>
    <property type="molecule type" value="mRNA"/>
</dbReference>
<dbReference type="EMBL" id="AB066566">
    <property type="protein sequence ID" value="BAB84092.1"/>
    <property type="molecule type" value="mRNA"/>
</dbReference>
<dbReference type="EMBL" id="AB078026">
    <property type="protein sequence ID" value="BAC00495.1"/>
    <property type="molecule type" value="mRNA"/>
</dbReference>
<dbReference type="EMBL" id="AB078027">
    <property type="protein sequence ID" value="BAC00496.1"/>
    <property type="molecule type" value="mRNA"/>
</dbReference>
<dbReference type="EMBL" id="AY313927">
    <property type="protein sequence ID" value="AAP93896.1"/>
    <property type="molecule type" value="mRNA"/>
</dbReference>
<dbReference type="EMBL" id="BT006996">
    <property type="protein sequence ID" value="AAP35642.1"/>
    <property type="molecule type" value="mRNA"/>
</dbReference>
<dbReference type="EMBL" id="AY426987">
    <property type="protein sequence ID" value="AAQ93358.1"/>
    <property type="molecule type" value="Genomic_DNA"/>
</dbReference>
<dbReference type="EMBL" id="AK312998">
    <property type="protein sequence ID" value="BAG35834.1"/>
    <property type="molecule type" value="mRNA"/>
</dbReference>
<dbReference type="EMBL" id="DA589280">
    <property type="status" value="NOT_ANNOTATED_CDS"/>
    <property type="molecule type" value="mRNA"/>
</dbReference>
<dbReference type="EMBL" id="CR450334">
    <property type="protein sequence ID" value="CAG29330.1"/>
    <property type="molecule type" value="mRNA"/>
</dbReference>
<dbReference type="EMBL" id="AC092803">
    <property type="status" value="NOT_ANNOTATED_CDS"/>
    <property type="molecule type" value="Genomic_DNA"/>
</dbReference>
<dbReference type="EMBL" id="AL590648">
    <property type="status" value="NOT_ANNOTATED_CDS"/>
    <property type="molecule type" value="Genomic_DNA"/>
</dbReference>
<dbReference type="EMBL" id="AL606913">
    <property type="status" value="NOT_ANNOTATED_CDS"/>
    <property type="molecule type" value="Genomic_DNA"/>
</dbReference>
<dbReference type="EMBL" id="CH471100">
    <property type="protein sequence ID" value="EAW93385.1"/>
    <property type="molecule type" value="Genomic_DNA"/>
</dbReference>
<dbReference type="EMBL" id="CH471100">
    <property type="protein sequence ID" value="EAW93386.1"/>
    <property type="molecule type" value="Genomic_DNA"/>
</dbReference>
<dbReference type="EMBL" id="CH471100">
    <property type="protein sequence ID" value="EAW93387.1"/>
    <property type="molecule type" value="Genomic_DNA"/>
</dbReference>
<dbReference type="EMBL" id="CH471100">
    <property type="protein sequence ID" value="EAW93388.1"/>
    <property type="molecule type" value="Genomic_DNA"/>
</dbReference>
<dbReference type="EMBL" id="BC006322">
    <property type="protein sequence ID" value="AAH06322.1"/>
    <property type="molecule type" value="mRNA"/>
</dbReference>
<dbReference type="CCDS" id="CCDS1506.1">
    <molecule id="P18847-1"/>
</dbReference>
<dbReference type="CCDS" id="CCDS41464.1">
    <molecule id="P18847-3"/>
</dbReference>
<dbReference type="CCDS" id="CCDS55688.1">
    <molecule id="P18847-4"/>
</dbReference>
<dbReference type="CCDS" id="CCDS58059.1">
    <molecule id="P18847-5"/>
</dbReference>
<dbReference type="PIR" id="A54025">
    <property type="entry name" value="A54025"/>
</dbReference>
<dbReference type="PIR" id="B54025">
    <property type="entry name" value="B54025"/>
</dbReference>
<dbReference type="PIR" id="C34223">
    <property type="entry name" value="C34223"/>
</dbReference>
<dbReference type="RefSeq" id="NP_001025458.1">
    <molecule id="P18847-1"/>
    <property type="nucleotide sequence ID" value="NM_001030287.4"/>
</dbReference>
<dbReference type="RefSeq" id="NP_001035709.1">
    <molecule id="P18847-3"/>
    <property type="nucleotide sequence ID" value="NM_001040619.3"/>
</dbReference>
<dbReference type="RefSeq" id="NP_001193413.2">
    <molecule id="P18847-5"/>
    <property type="nucleotide sequence ID" value="NM_001206484.3"/>
</dbReference>
<dbReference type="RefSeq" id="NP_001193415.1">
    <molecule id="P18847-4"/>
    <property type="nucleotide sequence ID" value="NM_001206486.2"/>
</dbReference>
<dbReference type="RefSeq" id="NP_001193417.2">
    <molecule id="P18847-5"/>
    <property type="nucleotide sequence ID" value="NM_001206488.3"/>
</dbReference>
<dbReference type="RefSeq" id="NP_001665.1">
    <molecule id="P18847-1"/>
    <property type="nucleotide sequence ID" value="NM_001674.4"/>
</dbReference>
<dbReference type="RefSeq" id="XP_005273203.1">
    <molecule id="P18847-1"/>
    <property type="nucleotide sequence ID" value="XM_005273146.2"/>
</dbReference>
<dbReference type="RefSeq" id="XP_011507881.1">
    <molecule id="P18847-1"/>
    <property type="nucleotide sequence ID" value="XM_011509579.2"/>
</dbReference>
<dbReference type="RefSeq" id="XP_054192718.1">
    <molecule id="P18847-1"/>
    <property type="nucleotide sequence ID" value="XM_054336743.1"/>
</dbReference>
<dbReference type="RefSeq" id="XP_054192719.1">
    <molecule id="P18847-1"/>
    <property type="nucleotide sequence ID" value="XM_054336744.1"/>
</dbReference>
<dbReference type="SMR" id="P18847"/>
<dbReference type="BioGRID" id="106957">
    <property type="interactions" value="93"/>
</dbReference>
<dbReference type="ComplexPortal" id="CPX-6385">
    <property type="entry name" value="bZIP transcription factor complex, ATF3-ATF4"/>
</dbReference>
<dbReference type="ComplexPortal" id="CPX-6407">
    <property type="entry name" value="bZIP transcription factor complex, ATF2-ATF3"/>
</dbReference>
<dbReference type="ComplexPortal" id="CPX-6465">
    <property type="entry name" value="bZIP transcription factor complex, ATF3-ATF3"/>
</dbReference>
<dbReference type="ComplexPortal" id="CPX-6466">
    <property type="entry name" value="bZIP transcription factor complex, ATF3-ATF7"/>
</dbReference>
<dbReference type="ComplexPortal" id="CPX-6467">
    <property type="entry name" value="bZIP transcription factor complex, ATF3-BATF"/>
</dbReference>
<dbReference type="ComplexPortal" id="CPX-6468">
    <property type="entry name" value="bZIP transcription factor complex, ATF3-BATF3"/>
</dbReference>
<dbReference type="ComplexPortal" id="CPX-6469">
    <property type="entry name" value="bZIP transcription factor complex, ATF3-CEBPA"/>
</dbReference>
<dbReference type="ComplexPortal" id="CPX-6470">
    <property type="entry name" value="bZIP transcription factor complex, ATF3-CEBPB"/>
</dbReference>
<dbReference type="ComplexPortal" id="CPX-6471">
    <property type="entry name" value="bZIP transcription factor complex, ATF3-CEBPG"/>
</dbReference>
<dbReference type="ComplexPortal" id="CPX-6472">
    <property type="entry name" value="bZIP transcription factor complex, ATF3-CEBPE"/>
</dbReference>
<dbReference type="ComplexPortal" id="CPX-6473">
    <property type="entry name" value="bZIP transcription factor complex, ATF3-DDIT3"/>
</dbReference>
<dbReference type="ComplexPortal" id="CPX-6474">
    <property type="entry name" value="bZIP transcription factor complex, ATF3-JUN"/>
</dbReference>
<dbReference type="ComplexPortal" id="CPX-6476">
    <property type="entry name" value="bZIP transcription factor complex, ATF3-JUNB"/>
</dbReference>
<dbReference type="ComplexPortal" id="CPX-6477">
    <property type="entry name" value="bZIP transcription factor complex, ATF3-FOS"/>
</dbReference>
<dbReference type="ComplexPortal" id="CPX-6478">
    <property type="entry name" value="bZIP transcription factor complex, ATF3-FOSL1"/>
</dbReference>
<dbReference type="ComplexPortal" id="CPX-6479">
    <property type="entry name" value="bZIP transcription factor complex, ATF3-FOSL2"/>
</dbReference>
<dbReference type="ComplexPortal" id="CPX-6480">
    <property type="entry name" value="bZIP transcription factor complex, ATF3-MAFF"/>
</dbReference>
<dbReference type="ComplexPortal" id="CPX-6481">
    <property type="entry name" value="bZIP transcription factor complex, ATF3-MAFG"/>
</dbReference>
<dbReference type="CORUM" id="P18847"/>
<dbReference type="DIP" id="DIP-344N"/>
<dbReference type="FunCoup" id="P18847">
    <property type="interactions" value="3251"/>
</dbReference>
<dbReference type="IntAct" id="P18847">
    <property type="interactions" value="66"/>
</dbReference>
<dbReference type="MINT" id="P18847"/>
<dbReference type="STRING" id="9606.ENSP00000344352"/>
<dbReference type="DrugBank" id="DB00852">
    <property type="generic name" value="Pseudoephedrine"/>
</dbReference>
<dbReference type="GlyGen" id="P18847">
    <property type="glycosylation" value="1 site, 1 O-linked glycan (1 site)"/>
</dbReference>
<dbReference type="iPTMnet" id="P18847"/>
<dbReference type="PhosphoSitePlus" id="P18847"/>
<dbReference type="BioMuta" id="ATF3"/>
<dbReference type="DMDM" id="1168543"/>
<dbReference type="CPTAC" id="CPTAC-1755"/>
<dbReference type="jPOST" id="P18847"/>
<dbReference type="MassIVE" id="P18847"/>
<dbReference type="PaxDb" id="9606-ENSP00000344352"/>
<dbReference type="PeptideAtlas" id="P18847"/>
<dbReference type="ProteomicsDB" id="53611">
    <molecule id="P18847-1"/>
</dbReference>
<dbReference type="ProteomicsDB" id="53612">
    <molecule id="P18847-2"/>
</dbReference>
<dbReference type="ProteomicsDB" id="53613">
    <molecule id="P18847-3"/>
</dbReference>
<dbReference type="ProteomicsDB" id="53614">
    <molecule id="P18847-4"/>
</dbReference>
<dbReference type="ProteomicsDB" id="65367"/>
<dbReference type="Pumba" id="P18847"/>
<dbReference type="TopDownProteomics" id="P18847-1">
    <molecule id="P18847-1"/>
</dbReference>
<dbReference type="Antibodypedia" id="658">
    <property type="antibodies" value="555 antibodies from 37 providers"/>
</dbReference>
<dbReference type="DNASU" id="467"/>
<dbReference type="Ensembl" id="ENST00000336937.8">
    <molecule id="P18847-4"/>
    <property type="protein sequence ID" value="ENSP00000336908.4"/>
    <property type="gene ID" value="ENSG00000162772.18"/>
</dbReference>
<dbReference type="Ensembl" id="ENST00000341491.9">
    <molecule id="P18847-1"/>
    <property type="protein sequence ID" value="ENSP00000344352.4"/>
    <property type="gene ID" value="ENSG00000162772.18"/>
</dbReference>
<dbReference type="Ensembl" id="ENST00000366983.5">
    <molecule id="P18847-3"/>
    <property type="protein sequence ID" value="ENSP00000355950.1"/>
    <property type="gene ID" value="ENSG00000162772.18"/>
</dbReference>
<dbReference type="Ensembl" id="ENST00000366987.6">
    <molecule id="P18847-1"/>
    <property type="protein sequence ID" value="ENSP00000355954.2"/>
    <property type="gene ID" value="ENSG00000162772.18"/>
</dbReference>
<dbReference type="Ensembl" id="ENST00000464547.5">
    <molecule id="P18847-3"/>
    <property type="protein sequence ID" value="ENSP00000432208.1"/>
    <property type="gene ID" value="ENSG00000162772.18"/>
</dbReference>
<dbReference type="Ensembl" id="ENST00000613104.1">
    <molecule id="P18847-5"/>
    <property type="protein sequence ID" value="ENSP00000480606.1"/>
    <property type="gene ID" value="ENSG00000162772.18"/>
</dbReference>
<dbReference type="GeneID" id="467"/>
<dbReference type="KEGG" id="hsa:467"/>
<dbReference type="MANE-Select" id="ENST00000341491.9">
    <property type="protein sequence ID" value="ENSP00000344352.4"/>
    <property type="RefSeq nucleotide sequence ID" value="NM_001674.4"/>
    <property type="RefSeq protein sequence ID" value="NP_001665.1"/>
</dbReference>
<dbReference type="UCSC" id="uc001hjf.4">
    <molecule id="P18847-1"/>
    <property type="organism name" value="human"/>
</dbReference>
<dbReference type="AGR" id="HGNC:785"/>
<dbReference type="CTD" id="467"/>
<dbReference type="DisGeNET" id="467"/>
<dbReference type="GeneCards" id="ATF3"/>
<dbReference type="HGNC" id="HGNC:785">
    <property type="gene designation" value="ATF3"/>
</dbReference>
<dbReference type="HPA" id="ENSG00000162772">
    <property type="expression patterns" value="Low tissue specificity"/>
</dbReference>
<dbReference type="MIM" id="603148">
    <property type="type" value="gene"/>
</dbReference>
<dbReference type="neXtProt" id="NX_P18847"/>
<dbReference type="OpenTargets" id="ENSG00000162772"/>
<dbReference type="PharmGKB" id="PA25085"/>
<dbReference type="VEuPathDB" id="HostDB:ENSG00000162772"/>
<dbReference type="eggNOG" id="KOG1414">
    <property type="taxonomic scope" value="Eukaryota"/>
</dbReference>
<dbReference type="GeneTree" id="ENSGT00940000156376"/>
<dbReference type="HOGENOM" id="CLU_088612_0_2_1"/>
<dbReference type="InParanoid" id="P18847"/>
<dbReference type="OMA" id="KRECAPQ"/>
<dbReference type="OrthoDB" id="2596881at2759"/>
<dbReference type="PAN-GO" id="P18847">
    <property type="GO annotations" value="4 GO annotations based on evolutionary models"/>
</dbReference>
<dbReference type="PhylomeDB" id="P18847"/>
<dbReference type="TreeFam" id="TF326301"/>
<dbReference type="PathwayCommons" id="P18847"/>
<dbReference type="Reactome" id="R-HSA-380994">
    <property type="pathway name" value="ATF4 activates genes in response to endoplasmic reticulum stress"/>
</dbReference>
<dbReference type="Reactome" id="R-HSA-9633012">
    <property type="pathway name" value="Response of EIF2AK4 (GCN2) to amino acid deficiency"/>
</dbReference>
<dbReference type="Reactome" id="R-HSA-9648895">
    <property type="pathway name" value="Response of EIF2AK1 (HRI) to heme deficiency"/>
</dbReference>
<dbReference type="SignaLink" id="P18847"/>
<dbReference type="SIGNOR" id="P18847"/>
<dbReference type="BioGRID-ORCS" id="467">
    <property type="hits" value="17 hits in 1192 CRISPR screens"/>
</dbReference>
<dbReference type="ChiTaRS" id="ATF3">
    <property type="organism name" value="human"/>
</dbReference>
<dbReference type="GeneWiki" id="ATF3"/>
<dbReference type="GenomeRNAi" id="467"/>
<dbReference type="Pharos" id="P18847">
    <property type="development level" value="Tbio"/>
</dbReference>
<dbReference type="PRO" id="PR:P18847"/>
<dbReference type="Proteomes" id="UP000005640">
    <property type="component" value="Chromosome 1"/>
</dbReference>
<dbReference type="RNAct" id="P18847">
    <property type="molecule type" value="protein"/>
</dbReference>
<dbReference type="Bgee" id="ENSG00000162772">
    <property type="expression patterns" value="Expressed in vena cava and 201 other cell types or tissues"/>
</dbReference>
<dbReference type="ExpressionAtlas" id="P18847">
    <property type="expression patterns" value="baseline and differential"/>
</dbReference>
<dbReference type="GO" id="GO:0005813">
    <property type="term" value="C:centrosome"/>
    <property type="evidence" value="ECO:0000314"/>
    <property type="project" value="HPA"/>
</dbReference>
<dbReference type="GO" id="GO:1990622">
    <property type="term" value="C:CHOP-ATF3 complex"/>
    <property type="evidence" value="ECO:0000314"/>
    <property type="project" value="ParkinsonsUK-UCL"/>
</dbReference>
<dbReference type="GO" id="GO:0000785">
    <property type="term" value="C:chromatin"/>
    <property type="evidence" value="ECO:0000247"/>
    <property type="project" value="NTNU_SB"/>
</dbReference>
<dbReference type="GO" id="GO:0036064">
    <property type="term" value="C:ciliary basal body"/>
    <property type="evidence" value="ECO:0000314"/>
    <property type="project" value="HPA"/>
</dbReference>
<dbReference type="GO" id="GO:0005794">
    <property type="term" value="C:Golgi apparatus"/>
    <property type="evidence" value="ECO:0000314"/>
    <property type="project" value="HPA"/>
</dbReference>
<dbReference type="GO" id="GO:0043231">
    <property type="term" value="C:intracellular membrane-bounded organelle"/>
    <property type="evidence" value="ECO:0000314"/>
    <property type="project" value="HPA"/>
</dbReference>
<dbReference type="GO" id="GO:0016604">
    <property type="term" value="C:nuclear body"/>
    <property type="evidence" value="ECO:0000314"/>
    <property type="project" value="HPA"/>
</dbReference>
<dbReference type="GO" id="GO:0005730">
    <property type="term" value="C:nucleolus"/>
    <property type="evidence" value="ECO:0000314"/>
    <property type="project" value="HPA"/>
</dbReference>
<dbReference type="GO" id="GO:0005654">
    <property type="term" value="C:nucleoplasm"/>
    <property type="evidence" value="ECO:0000314"/>
    <property type="project" value="HPA"/>
</dbReference>
<dbReference type="GO" id="GO:0005634">
    <property type="term" value="C:nucleus"/>
    <property type="evidence" value="ECO:0000314"/>
    <property type="project" value="ParkinsonsUK-UCL"/>
</dbReference>
<dbReference type="GO" id="GO:0090575">
    <property type="term" value="C:RNA polymerase II transcription regulator complex"/>
    <property type="evidence" value="ECO:0000353"/>
    <property type="project" value="ComplexPortal"/>
</dbReference>
<dbReference type="GO" id="GO:0001228">
    <property type="term" value="F:DNA-binding transcription activator activity, RNA polymerase II-specific"/>
    <property type="evidence" value="ECO:0000314"/>
    <property type="project" value="NTNU_SB"/>
</dbReference>
<dbReference type="GO" id="GO:0003700">
    <property type="term" value="F:DNA-binding transcription factor activity"/>
    <property type="evidence" value="ECO:0000316"/>
    <property type="project" value="ParkinsonsUK-UCL"/>
</dbReference>
<dbReference type="GO" id="GO:0000981">
    <property type="term" value="F:DNA-binding transcription factor activity, RNA polymerase II-specific"/>
    <property type="evidence" value="ECO:0000247"/>
    <property type="project" value="NTNU_SB"/>
</dbReference>
<dbReference type="GO" id="GO:0001227">
    <property type="term" value="F:DNA-binding transcription repressor activity, RNA polymerase II-specific"/>
    <property type="evidence" value="ECO:0000314"/>
    <property type="project" value="ARUK-UCL"/>
</dbReference>
<dbReference type="GO" id="GO:0042802">
    <property type="term" value="F:identical protein binding"/>
    <property type="evidence" value="ECO:0000353"/>
    <property type="project" value="IntAct"/>
</dbReference>
<dbReference type="GO" id="GO:0046982">
    <property type="term" value="F:protein heterodimerization activity"/>
    <property type="evidence" value="ECO:0000353"/>
    <property type="project" value="ParkinsonsUK-UCL"/>
</dbReference>
<dbReference type="GO" id="GO:0042803">
    <property type="term" value="F:protein homodimerization activity"/>
    <property type="evidence" value="ECO:0000353"/>
    <property type="project" value="ParkinsonsUK-UCL"/>
</dbReference>
<dbReference type="GO" id="GO:0000978">
    <property type="term" value="F:RNA polymerase II cis-regulatory region sequence-specific DNA binding"/>
    <property type="evidence" value="ECO:0000250"/>
    <property type="project" value="ARUK-UCL"/>
</dbReference>
<dbReference type="GO" id="GO:0000977">
    <property type="term" value="F:RNA polymerase II transcription regulatory region sequence-specific DNA binding"/>
    <property type="evidence" value="ECO:0000314"/>
    <property type="project" value="NTNU_SB"/>
</dbReference>
<dbReference type="GO" id="GO:1990837">
    <property type="term" value="F:sequence-specific double-stranded DNA binding"/>
    <property type="evidence" value="ECO:0000314"/>
    <property type="project" value="ARUK-UCL"/>
</dbReference>
<dbReference type="GO" id="GO:0000976">
    <property type="term" value="F:transcription cis-regulatory region binding"/>
    <property type="evidence" value="ECO:0000314"/>
    <property type="project" value="ParkinsonsUK-UCL"/>
</dbReference>
<dbReference type="GO" id="GO:0034198">
    <property type="term" value="P:cellular response to amino acid starvation"/>
    <property type="evidence" value="ECO:0007669"/>
    <property type="project" value="Ensembl"/>
</dbReference>
<dbReference type="GO" id="GO:0030968">
    <property type="term" value="P:endoplasmic reticulum unfolded protein response"/>
    <property type="evidence" value="ECO:0007669"/>
    <property type="project" value="Ensembl"/>
</dbReference>
<dbReference type="GO" id="GO:0006094">
    <property type="term" value="P:gluconeogenesis"/>
    <property type="evidence" value="ECO:0007669"/>
    <property type="project" value="Ensembl"/>
</dbReference>
<dbReference type="GO" id="GO:0070373">
    <property type="term" value="P:negative regulation of ERK1 and ERK2 cascade"/>
    <property type="evidence" value="ECO:0007669"/>
    <property type="project" value="Ensembl"/>
</dbReference>
<dbReference type="GO" id="GO:0000122">
    <property type="term" value="P:negative regulation of transcription by RNA polymerase II"/>
    <property type="evidence" value="ECO:0000314"/>
    <property type="project" value="ParkinsonsUK-UCL"/>
</dbReference>
<dbReference type="GO" id="GO:0008284">
    <property type="term" value="P:positive regulation of cell population proliferation"/>
    <property type="evidence" value="ECO:0007669"/>
    <property type="project" value="Ensembl"/>
</dbReference>
<dbReference type="GO" id="GO:0010628">
    <property type="term" value="P:positive regulation of gene expression"/>
    <property type="evidence" value="ECO:0007669"/>
    <property type="project" value="Ensembl"/>
</dbReference>
<dbReference type="GO" id="GO:1903984">
    <property type="term" value="P:positive regulation of TRAIL-activated apoptotic signaling pathway"/>
    <property type="evidence" value="ECO:0000315"/>
    <property type="project" value="ParkinsonsUK-UCL"/>
</dbReference>
<dbReference type="GO" id="GO:0045944">
    <property type="term" value="P:positive regulation of transcription by RNA polymerase II"/>
    <property type="evidence" value="ECO:0000314"/>
    <property type="project" value="NTNU_SB"/>
</dbReference>
<dbReference type="GO" id="GO:0006357">
    <property type="term" value="P:regulation of transcription by RNA polymerase II"/>
    <property type="evidence" value="ECO:0000314"/>
    <property type="project" value="ComplexPortal"/>
</dbReference>
<dbReference type="GO" id="GO:0034976">
    <property type="term" value="P:response to endoplasmic reticulum stress"/>
    <property type="evidence" value="ECO:0000314"/>
    <property type="project" value="ParkinsonsUK-UCL"/>
</dbReference>
<dbReference type="GO" id="GO:0035914">
    <property type="term" value="P:skeletal muscle cell differentiation"/>
    <property type="evidence" value="ECO:0007669"/>
    <property type="project" value="Ensembl"/>
</dbReference>
<dbReference type="CDD" id="cd14722">
    <property type="entry name" value="bZIP_ATF3"/>
    <property type="match status" value="1"/>
</dbReference>
<dbReference type="FunFam" id="1.20.5.170:FF:000006">
    <property type="entry name" value="fos-related antigen 2 isoform X1"/>
    <property type="match status" value="1"/>
</dbReference>
<dbReference type="Gene3D" id="1.20.5.170">
    <property type="match status" value="1"/>
</dbReference>
<dbReference type="InterPro" id="IPR000837">
    <property type="entry name" value="AP-1"/>
</dbReference>
<dbReference type="InterPro" id="IPR004827">
    <property type="entry name" value="bZIP"/>
</dbReference>
<dbReference type="InterPro" id="IPR046347">
    <property type="entry name" value="bZIP_sf"/>
</dbReference>
<dbReference type="PANTHER" id="PTHR23351:SF23">
    <property type="entry name" value="CYCLIC AMP-DEPENDENT TRANSCRIPTION FACTOR ATF-3"/>
    <property type="match status" value="1"/>
</dbReference>
<dbReference type="PANTHER" id="PTHR23351">
    <property type="entry name" value="FOS TRANSCRIPTION FACTOR-RELATED"/>
    <property type="match status" value="1"/>
</dbReference>
<dbReference type="Pfam" id="PF00170">
    <property type="entry name" value="bZIP_1"/>
    <property type="match status" value="1"/>
</dbReference>
<dbReference type="PRINTS" id="PR00042">
    <property type="entry name" value="LEUZIPPRFOS"/>
</dbReference>
<dbReference type="SMART" id="SM00338">
    <property type="entry name" value="BRLZ"/>
    <property type="match status" value="1"/>
</dbReference>
<dbReference type="SUPFAM" id="SSF57959">
    <property type="entry name" value="Leucine zipper domain"/>
    <property type="match status" value="1"/>
</dbReference>
<dbReference type="PROSITE" id="PS50217">
    <property type="entry name" value="BZIP"/>
    <property type="match status" value="1"/>
</dbReference>
<dbReference type="PROSITE" id="PS00036">
    <property type="entry name" value="BZIP_BASIC"/>
    <property type="match status" value="1"/>
</dbReference>
<evidence type="ECO:0000255" key="1">
    <source>
        <dbReference type="PROSITE-ProRule" id="PRU00978"/>
    </source>
</evidence>
<evidence type="ECO:0000269" key="2">
    <source>
    </source>
</evidence>
<evidence type="ECO:0000269" key="3">
    <source>
    </source>
</evidence>
<evidence type="ECO:0000269" key="4">
    <source>
    </source>
</evidence>
<evidence type="ECO:0000269" key="5">
    <source>
    </source>
</evidence>
<evidence type="ECO:0000269" key="6">
    <source ref="5"/>
</evidence>
<evidence type="ECO:0000303" key="7">
    <source>
    </source>
</evidence>
<evidence type="ECO:0000303" key="8">
    <source>
    </source>
</evidence>
<evidence type="ECO:0000303" key="9">
    <source>
    </source>
</evidence>
<evidence type="ECO:0000303" key="10">
    <source>
    </source>
</evidence>
<evidence type="ECO:0000305" key="11"/>
<evidence type="ECO:0000312" key="12">
    <source>
        <dbReference type="HGNC" id="HGNC:785"/>
    </source>
</evidence>
<evidence type="ECO:0007744" key="13">
    <source>
    </source>
</evidence>
<evidence type="ECO:0007744" key="14">
    <source>
    </source>
</evidence>
<keyword id="KW-0025">Alternative splicing</keyword>
<keyword id="KW-0238">DNA-binding</keyword>
<keyword id="KW-1017">Isopeptide bond</keyword>
<keyword id="KW-0539">Nucleus</keyword>
<keyword id="KW-0597">Phosphoprotein</keyword>
<keyword id="KW-1267">Proteomics identification</keyword>
<keyword id="KW-1185">Reference proteome</keyword>
<keyword id="KW-0678">Repressor</keyword>
<keyword id="KW-0804">Transcription</keyword>
<keyword id="KW-0805">Transcription regulation</keyword>
<keyword id="KW-0832">Ubl conjugation</keyword>
<organism>
    <name type="scientific">Homo sapiens</name>
    <name type="common">Human</name>
    <dbReference type="NCBI Taxonomy" id="9606"/>
    <lineage>
        <taxon>Eukaryota</taxon>
        <taxon>Metazoa</taxon>
        <taxon>Chordata</taxon>
        <taxon>Craniata</taxon>
        <taxon>Vertebrata</taxon>
        <taxon>Euteleostomi</taxon>
        <taxon>Mammalia</taxon>
        <taxon>Eutheria</taxon>
        <taxon>Euarchontoglires</taxon>
        <taxon>Primates</taxon>
        <taxon>Haplorrhini</taxon>
        <taxon>Catarrhini</taxon>
        <taxon>Hominidae</taxon>
        <taxon>Homo</taxon>
    </lineage>
</organism>
<protein>
    <recommendedName>
        <fullName evidence="11">Cyclic AMP-dependent transcription factor ATF-3</fullName>
        <shortName evidence="10">cAMP-dependent transcription factor ATF-3</shortName>
    </recommendedName>
    <alternativeName>
        <fullName>Activating transcription factor 3</fullName>
    </alternativeName>
</protein>
<sequence length="181" mass="20576">MMLQHPGQVSASEVSASAIVPCLSPPGSLVFEDFANLTPFVKEELRFAIQNKHLCHRMSSALESVTVSDRPLGVSITKAEVAPEEDERKKRRRERNKIAAAKCRNKKKEKTECLQKESEKLESVNAELKAQIEELKNEKQHLIYMLNLHRPTCIVRAQNGRTPEDERNLFIQQIKEGTLQS</sequence>
<proteinExistence type="evidence at protein level"/>
<gene>
    <name evidence="10 12" type="primary">ATF3</name>
</gene>
<accession>P18847</accession>
<accession>Q5VTZ2</accession>
<accession>Q6ICQ9</accession>
<accession>Q7Z566</accession>
<accession>Q8WYM6</accession>